<keyword id="KW-0143">Chaperone</keyword>
<keyword id="KW-0963">Cytoplasm</keyword>
<keyword id="KW-0653">Protein transport</keyword>
<keyword id="KW-1185">Reference proteome</keyword>
<keyword id="KW-0811">Translocation</keyword>
<keyword id="KW-0813">Transport</keyword>
<accession>A8ARJ6</accession>
<reference key="1">
    <citation type="submission" date="2007-08" db="EMBL/GenBank/DDBJ databases">
        <authorList>
            <consortium name="The Citrobacter koseri Genome Sequencing Project"/>
            <person name="McClelland M."/>
            <person name="Sanderson E.K."/>
            <person name="Porwollik S."/>
            <person name="Spieth J."/>
            <person name="Clifton W.S."/>
            <person name="Latreille P."/>
            <person name="Courtney L."/>
            <person name="Wang C."/>
            <person name="Pepin K."/>
            <person name="Bhonagiri V."/>
            <person name="Nash W."/>
            <person name="Johnson M."/>
            <person name="Thiruvilangam P."/>
            <person name="Wilson R."/>
        </authorList>
    </citation>
    <scope>NUCLEOTIDE SEQUENCE [LARGE SCALE GENOMIC DNA]</scope>
    <source>
        <strain>ATCC BAA-895 / CDC 4225-83 / SGSC4696</strain>
    </source>
</reference>
<protein>
    <recommendedName>
        <fullName evidence="1">Protein-export protein SecB</fullName>
    </recommendedName>
</protein>
<organism>
    <name type="scientific">Citrobacter koseri (strain ATCC BAA-895 / CDC 4225-83 / SGSC4696)</name>
    <dbReference type="NCBI Taxonomy" id="290338"/>
    <lineage>
        <taxon>Bacteria</taxon>
        <taxon>Pseudomonadati</taxon>
        <taxon>Pseudomonadota</taxon>
        <taxon>Gammaproteobacteria</taxon>
        <taxon>Enterobacterales</taxon>
        <taxon>Enterobacteriaceae</taxon>
        <taxon>Citrobacter</taxon>
    </lineage>
</organism>
<comment type="function">
    <text evidence="1">One of the proteins required for the normal export of preproteins out of the cell cytoplasm. It is a molecular chaperone that binds to a subset of precursor proteins, maintaining them in a translocation-competent state. It also specifically binds to its receptor SecA.</text>
</comment>
<comment type="subunit">
    <text evidence="1">Homotetramer, a dimer of dimers. One homotetramer interacts with 1 SecA dimer.</text>
</comment>
<comment type="subcellular location">
    <subcellularLocation>
        <location evidence="1">Cytoplasm</location>
    </subcellularLocation>
</comment>
<comment type="similarity">
    <text evidence="1">Belongs to the SecB family.</text>
</comment>
<feature type="chain" id="PRO_1000062470" description="Protein-export protein SecB">
    <location>
        <begin position="1"/>
        <end position="155"/>
    </location>
</feature>
<evidence type="ECO:0000255" key="1">
    <source>
        <dbReference type="HAMAP-Rule" id="MF_00821"/>
    </source>
</evidence>
<proteinExistence type="inferred from homology"/>
<name>SECB_CITK8</name>
<gene>
    <name evidence="1" type="primary">secB</name>
    <name type="ordered locus">CKO_05066</name>
</gene>
<dbReference type="EMBL" id="CP000822">
    <property type="protein sequence ID" value="ABV16109.1"/>
    <property type="molecule type" value="Genomic_DNA"/>
</dbReference>
<dbReference type="RefSeq" id="WP_003024155.1">
    <property type="nucleotide sequence ID" value="NC_009792.1"/>
</dbReference>
<dbReference type="SMR" id="A8ARJ6"/>
<dbReference type="STRING" id="290338.CKO_05066"/>
<dbReference type="GeneID" id="93035472"/>
<dbReference type="KEGG" id="cko:CKO_05066"/>
<dbReference type="HOGENOM" id="CLU_111574_1_0_6"/>
<dbReference type="OrthoDB" id="9795145at2"/>
<dbReference type="Proteomes" id="UP000008148">
    <property type="component" value="Chromosome"/>
</dbReference>
<dbReference type="GO" id="GO:0005737">
    <property type="term" value="C:cytoplasm"/>
    <property type="evidence" value="ECO:0007669"/>
    <property type="project" value="UniProtKB-SubCell"/>
</dbReference>
<dbReference type="GO" id="GO:0051082">
    <property type="term" value="F:unfolded protein binding"/>
    <property type="evidence" value="ECO:0007669"/>
    <property type="project" value="InterPro"/>
</dbReference>
<dbReference type="GO" id="GO:0006457">
    <property type="term" value="P:protein folding"/>
    <property type="evidence" value="ECO:0007669"/>
    <property type="project" value="UniProtKB-UniRule"/>
</dbReference>
<dbReference type="GO" id="GO:0051262">
    <property type="term" value="P:protein tetramerization"/>
    <property type="evidence" value="ECO:0007669"/>
    <property type="project" value="InterPro"/>
</dbReference>
<dbReference type="GO" id="GO:0015031">
    <property type="term" value="P:protein transport"/>
    <property type="evidence" value="ECO:0007669"/>
    <property type="project" value="UniProtKB-UniRule"/>
</dbReference>
<dbReference type="CDD" id="cd00557">
    <property type="entry name" value="Translocase_SecB"/>
    <property type="match status" value="1"/>
</dbReference>
<dbReference type="FunFam" id="3.10.420.10:FF:000001">
    <property type="entry name" value="Protein-export chaperone SecB"/>
    <property type="match status" value="1"/>
</dbReference>
<dbReference type="Gene3D" id="3.10.420.10">
    <property type="entry name" value="SecB-like"/>
    <property type="match status" value="1"/>
</dbReference>
<dbReference type="HAMAP" id="MF_00821">
    <property type="entry name" value="SecB"/>
    <property type="match status" value="1"/>
</dbReference>
<dbReference type="InterPro" id="IPR003708">
    <property type="entry name" value="SecB"/>
</dbReference>
<dbReference type="InterPro" id="IPR035958">
    <property type="entry name" value="SecB-like_sf"/>
</dbReference>
<dbReference type="NCBIfam" id="NF004390">
    <property type="entry name" value="PRK05751.1-1"/>
    <property type="match status" value="1"/>
</dbReference>
<dbReference type="NCBIfam" id="NF004393">
    <property type="entry name" value="PRK05751.1-4"/>
    <property type="match status" value="1"/>
</dbReference>
<dbReference type="NCBIfam" id="TIGR00809">
    <property type="entry name" value="secB"/>
    <property type="match status" value="1"/>
</dbReference>
<dbReference type="PANTHER" id="PTHR36918">
    <property type="match status" value="1"/>
</dbReference>
<dbReference type="PANTHER" id="PTHR36918:SF1">
    <property type="entry name" value="PROTEIN-EXPORT PROTEIN SECB"/>
    <property type="match status" value="1"/>
</dbReference>
<dbReference type="Pfam" id="PF02556">
    <property type="entry name" value="SecB"/>
    <property type="match status" value="1"/>
</dbReference>
<dbReference type="PRINTS" id="PR01594">
    <property type="entry name" value="SECBCHAPRONE"/>
</dbReference>
<dbReference type="SUPFAM" id="SSF54611">
    <property type="entry name" value="SecB-like"/>
    <property type="match status" value="1"/>
</dbReference>
<sequence>MSEQNNTEMAFQIQRIYTKDVSFEAPNAPHVFQKDWQPEVKLDLDTASTQLADDVYEVVLRVTVTASLGEETAFLCEVQQGGIFSISGIEGTQMAHCLGAYCPNILFPYARECITSLVSRGTFPQLNLAPVNFDALFMNYLQQQAGEGTEEHQDA</sequence>